<dbReference type="EC" id="2.1.-.-" evidence="1"/>
<dbReference type="EMBL" id="CP001144">
    <property type="protein sequence ID" value="ACH74898.1"/>
    <property type="molecule type" value="Genomic_DNA"/>
</dbReference>
<dbReference type="RefSeq" id="WP_000100071.1">
    <property type="nucleotide sequence ID" value="NC_011205.1"/>
</dbReference>
<dbReference type="KEGG" id="sed:SeD_A2224"/>
<dbReference type="HOGENOM" id="CLU_036182_2_0_6"/>
<dbReference type="UniPathway" id="UPA00637"/>
<dbReference type="Proteomes" id="UP000008322">
    <property type="component" value="Chromosome"/>
</dbReference>
<dbReference type="GO" id="GO:0005886">
    <property type="term" value="C:plasma membrane"/>
    <property type="evidence" value="ECO:0007669"/>
    <property type="project" value="UniProtKB-SubCell"/>
</dbReference>
<dbReference type="GO" id="GO:0016747">
    <property type="term" value="F:acyltransferase activity, transferring groups other than amino-acyl groups"/>
    <property type="evidence" value="ECO:0007669"/>
    <property type="project" value="InterPro"/>
</dbReference>
<dbReference type="GO" id="GO:0016741">
    <property type="term" value="F:transferase activity, transferring one-carbon groups"/>
    <property type="evidence" value="ECO:0007669"/>
    <property type="project" value="UniProtKB-UniRule"/>
</dbReference>
<dbReference type="GO" id="GO:0009250">
    <property type="term" value="P:glucan biosynthetic process"/>
    <property type="evidence" value="ECO:0007669"/>
    <property type="project" value="UniProtKB-UniRule"/>
</dbReference>
<dbReference type="HAMAP" id="MF_01066">
    <property type="entry name" value="MdoC_OpgC"/>
    <property type="match status" value="1"/>
</dbReference>
<dbReference type="InterPro" id="IPR002656">
    <property type="entry name" value="Acyl_transf_3_dom"/>
</dbReference>
<dbReference type="InterPro" id="IPR050623">
    <property type="entry name" value="Glucan_succinyl_AcylTrfase"/>
</dbReference>
<dbReference type="InterPro" id="IPR023723">
    <property type="entry name" value="Glucans_biosynth_C"/>
</dbReference>
<dbReference type="NCBIfam" id="NF003014">
    <property type="entry name" value="PRK03854.1"/>
    <property type="match status" value="1"/>
</dbReference>
<dbReference type="PANTHER" id="PTHR36927">
    <property type="entry name" value="BLR4337 PROTEIN"/>
    <property type="match status" value="1"/>
</dbReference>
<dbReference type="PANTHER" id="PTHR36927:SF3">
    <property type="entry name" value="GLUCANS BIOSYNTHESIS PROTEIN C"/>
    <property type="match status" value="1"/>
</dbReference>
<dbReference type="Pfam" id="PF01757">
    <property type="entry name" value="Acyl_transf_3"/>
    <property type="match status" value="1"/>
</dbReference>
<feature type="chain" id="PRO_1000136571" description="Glucans biosynthesis protein C">
    <location>
        <begin position="1"/>
        <end position="384"/>
    </location>
</feature>
<feature type="transmembrane region" description="Helical" evidence="1">
    <location>
        <begin position="17"/>
        <end position="37"/>
    </location>
</feature>
<feature type="transmembrane region" description="Helical" evidence="1">
    <location>
        <begin position="54"/>
        <end position="74"/>
    </location>
</feature>
<feature type="transmembrane region" description="Helical" evidence="1">
    <location>
        <begin position="91"/>
        <end position="111"/>
    </location>
</feature>
<feature type="transmembrane region" description="Helical" evidence="1">
    <location>
        <begin position="140"/>
        <end position="160"/>
    </location>
</feature>
<feature type="transmembrane region" description="Helical" evidence="1">
    <location>
        <begin position="173"/>
        <end position="193"/>
    </location>
</feature>
<feature type="transmembrane region" description="Helical" evidence="1">
    <location>
        <begin position="212"/>
        <end position="232"/>
    </location>
</feature>
<feature type="transmembrane region" description="Helical" evidence="1">
    <location>
        <begin position="240"/>
        <end position="260"/>
    </location>
</feature>
<feature type="transmembrane region" description="Helical" evidence="1">
    <location>
        <begin position="274"/>
        <end position="294"/>
    </location>
</feature>
<feature type="transmembrane region" description="Helical" evidence="1">
    <location>
        <begin position="311"/>
        <end position="331"/>
    </location>
</feature>
<feature type="transmembrane region" description="Helical" evidence="1">
    <location>
        <begin position="338"/>
        <end position="358"/>
    </location>
</feature>
<sequence length="384" mass="44350">MSSVPAPREYFLDSIRAWLMLLGIPFHISLIYSTHSWHVNSATPSWWLTLFNDFIHAFRMQVFFVISGYFSYMLFLRYPLKRWWKVRVERVGIPMLTAIPLLTLPQFILLQYVKEKTENWPTLSAYEKYNTLAWELISHLWFLLVLVILTTVSIGIFTWFQKRQETSKPRPAAISLVRLSLIFFLLGMAYAAIRRIIFIVYPAILSDGMFNFIVMQTLFYVPFFILGALAFIHPDLKARFTTPSRGCTLGAAVAFIAYLLNQRYGSGDAWMYETESVITMVMGLWMVNVVFSLGHRLLNFQSARVTYFVNASLFIYLVHHPLTLFFGAYITPHISSNLIGFLCGLIFVMGIALILYEIHLRIPLLKFLFSGKPPVKQESRAAIG</sequence>
<protein>
    <recommendedName>
        <fullName evidence="1">Glucans biosynthesis protein C</fullName>
        <ecNumber evidence="1">2.1.-.-</ecNumber>
    </recommendedName>
</protein>
<organism>
    <name type="scientific">Salmonella dublin (strain CT_02021853)</name>
    <dbReference type="NCBI Taxonomy" id="439851"/>
    <lineage>
        <taxon>Bacteria</taxon>
        <taxon>Pseudomonadati</taxon>
        <taxon>Pseudomonadota</taxon>
        <taxon>Gammaproteobacteria</taxon>
        <taxon>Enterobacterales</taxon>
        <taxon>Enterobacteriaceae</taxon>
        <taxon>Salmonella</taxon>
    </lineage>
</organism>
<gene>
    <name evidence="1" type="primary">mdoC</name>
    <name evidence="1" type="synonym">opgC</name>
    <name type="ordered locus">SeD_A2224</name>
</gene>
<accession>B5FL16</accession>
<evidence type="ECO:0000255" key="1">
    <source>
        <dbReference type="HAMAP-Rule" id="MF_01066"/>
    </source>
</evidence>
<reference key="1">
    <citation type="journal article" date="2011" name="J. Bacteriol.">
        <title>Comparative genomics of 28 Salmonella enterica isolates: evidence for CRISPR-mediated adaptive sublineage evolution.</title>
        <authorList>
            <person name="Fricke W.F."/>
            <person name="Mammel M.K."/>
            <person name="McDermott P.F."/>
            <person name="Tartera C."/>
            <person name="White D.G."/>
            <person name="Leclerc J.E."/>
            <person name="Ravel J."/>
            <person name="Cebula T.A."/>
        </authorList>
    </citation>
    <scope>NUCLEOTIDE SEQUENCE [LARGE SCALE GENOMIC DNA]</scope>
    <source>
        <strain>CT_02021853</strain>
    </source>
</reference>
<proteinExistence type="inferred from homology"/>
<keyword id="KW-0012">Acyltransferase</keyword>
<keyword id="KW-1003">Cell membrane</keyword>
<keyword id="KW-0472">Membrane</keyword>
<keyword id="KW-0808">Transferase</keyword>
<keyword id="KW-0812">Transmembrane</keyword>
<keyword id="KW-1133">Transmembrane helix</keyword>
<name>OPGC_SALDC</name>
<comment type="function">
    <text evidence="1">Necessary for the succinyl substitution of periplasmic glucans. Could catalyze the transfer of succinyl residues from the cytoplasmic side of the membrane to the nascent glucan backbones on the periplasmic side of the membrane.</text>
</comment>
<comment type="pathway">
    <text evidence="1">Glycan metabolism; osmoregulated periplasmic glucan (OPG) biosynthesis.</text>
</comment>
<comment type="subcellular location">
    <subcellularLocation>
        <location evidence="1">Cell membrane</location>
        <topology evidence="1">Multi-pass membrane protein</topology>
    </subcellularLocation>
</comment>
<comment type="similarity">
    <text evidence="1">Belongs to the acyltransferase 3 family. OpgC subfamily.</text>
</comment>